<protein>
    <recommendedName>
        <fullName>Uncharacterized lipoprotein SAV0440</fullName>
    </recommendedName>
</protein>
<evidence type="ECO:0000255" key="1">
    <source>
        <dbReference type="PROSITE-ProRule" id="PRU00303"/>
    </source>
</evidence>
<evidence type="ECO:0000305" key="2"/>
<name>Y440_STAAM</name>
<comment type="subcellular location">
    <subcellularLocation>
        <location evidence="1">Cell membrane</location>
        <topology evidence="1">Lipid-anchor</topology>
    </subcellularLocation>
</comment>
<comment type="similarity">
    <text evidence="2">Belongs to the staphylococcal tandem lipoprotein family.</text>
</comment>
<sequence>MRDSKRVVLYISIIVLSIFIIGCGKGNEIKEDAKEEQIKKSFAKTLDMYPIKNLEDLYDKEGYRDGEFKKGDKGMWTIYTDFAKSNRPGVLDNEGMVLNLDRNTRTAKGYYFVDTIYDNHENSYSKNYRVEMKNNKIILLDKVEDQKLKERIENFKFFGQYADFKSLKSYNHGDVSINSNVPSYDAKFKMSNKDENVKQLRSRYNIPTDKAPILKMHIDGDLKGSSVGYKKLEIDFSKEENSELSIVDSLNFQPAKNKDDE</sequence>
<dbReference type="EMBL" id="BA000017">
    <property type="protein sequence ID" value="BAB56602.1"/>
    <property type="molecule type" value="Genomic_DNA"/>
</dbReference>
<dbReference type="RefSeq" id="WP_001205662.1">
    <property type="nucleotide sequence ID" value="NC_002758.2"/>
</dbReference>
<dbReference type="SMR" id="Q932G7"/>
<dbReference type="DNASU" id="1120397"/>
<dbReference type="KEGG" id="sav:SAV0440"/>
<dbReference type="HOGENOM" id="CLU_071589_0_1_9"/>
<dbReference type="PhylomeDB" id="Q932G7"/>
<dbReference type="Proteomes" id="UP000002481">
    <property type="component" value="Chromosome"/>
</dbReference>
<dbReference type="GO" id="GO:0005886">
    <property type="term" value="C:plasma membrane"/>
    <property type="evidence" value="ECO:0007669"/>
    <property type="project" value="UniProtKB-SubCell"/>
</dbReference>
<dbReference type="Gene3D" id="2.50.20.40">
    <property type="match status" value="1"/>
</dbReference>
<dbReference type="InterPro" id="IPR007595">
    <property type="entry name" value="Csa"/>
</dbReference>
<dbReference type="InterPro" id="IPR038641">
    <property type="entry name" value="Csa_sf"/>
</dbReference>
<dbReference type="NCBIfam" id="TIGR01742">
    <property type="entry name" value="SA_tandem_lipo"/>
    <property type="match status" value="1"/>
</dbReference>
<dbReference type="Pfam" id="PF04507">
    <property type="entry name" value="DUF576"/>
    <property type="match status" value="1"/>
</dbReference>
<dbReference type="PROSITE" id="PS51257">
    <property type="entry name" value="PROKAR_LIPOPROTEIN"/>
    <property type="match status" value="1"/>
</dbReference>
<keyword id="KW-1003">Cell membrane</keyword>
<keyword id="KW-0449">Lipoprotein</keyword>
<keyword id="KW-0472">Membrane</keyword>
<keyword id="KW-0564">Palmitate</keyword>
<keyword id="KW-0732">Signal</keyword>
<reference key="1">
    <citation type="journal article" date="2001" name="Lancet">
        <title>Whole genome sequencing of meticillin-resistant Staphylococcus aureus.</title>
        <authorList>
            <person name="Kuroda M."/>
            <person name="Ohta T."/>
            <person name="Uchiyama I."/>
            <person name="Baba T."/>
            <person name="Yuzawa H."/>
            <person name="Kobayashi I."/>
            <person name="Cui L."/>
            <person name="Oguchi A."/>
            <person name="Aoki K."/>
            <person name="Nagai Y."/>
            <person name="Lian J.-Q."/>
            <person name="Ito T."/>
            <person name="Kanamori M."/>
            <person name="Matsumaru H."/>
            <person name="Maruyama A."/>
            <person name="Murakami H."/>
            <person name="Hosoyama A."/>
            <person name="Mizutani-Ui Y."/>
            <person name="Takahashi N.K."/>
            <person name="Sawano T."/>
            <person name="Inoue R."/>
            <person name="Kaito C."/>
            <person name="Sekimizu K."/>
            <person name="Hirakawa H."/>
            <person name="Kuhara S."/>
            <person name="Goto S."/>
            <person name="Yabuzaki J."/>
            <person name="Kanehisa M."/>
            <person name="Yamashita A."/>
            <person name="Oshima K."/>
            <person name="Furuya K."/>
            <person name="Yoshino C."/>
            <person name="Shiba T."/>
            <person name="Hattori M."/>
            <person name="Ogasawara N."/>
            <person name="Hayashi H."/>
            <person name="Hiramatsu K."/>
        </authorList>
    </citation>
    <scope>NUCLEOTIDE SEQUENCE [LARGE SCALE GENOMIC DNA]</scope>
    <source>
        <strain>Mu50 / ATCC 700699</strain>
    </source>
</reference>
<organism>
    <name type="scientific">Staphylococcus aureus (strain Mu50 / ATCC 700699)</name>
    <dbReference type="NCBI Taxonomy" id="158878"/>
    <lineage>
        <taxon>Bacteria</taxon>
        <taxon>Bacillati</taxon>
        <taxon>Bacillota</taxon>
        <taxon>Bacilli</taxon>
        <taxon>Bacillales</taxon>
        <taxon>Staphylococcaceae</taxon>
        <taxon>Staphylococcus</taxon>
    </lineage>
</organism>
<proteinExistence type="inferred from homology"/>
<feature type="signal peptide" evidence="1">
    <location>
        <begin position="1"/>
        <end position="22"/>
    </location>
</feature>
<feature type="chain" id="PRO_0000282127" description="Uncharacterized lipoprotein SAV0440">
    <location>
        <begin position="23"/>
        <end position="261"/>
    </location>
</feature>
<feature type="lipid moiety-binding region" description="N-palmitoyl cysteine" evidence="1">
    <location>
        <position position="23"/>
    </location>
</feature>
<feature type="lipid moiety-binding region" description="S-diacylglycerol cysteine" evidence="1">
    <location>
        <position position="23"/>
    </location>
</feature>
<accession>Q932G7</accession>
<gene>
    <name type="ordered locus">SAV0440</name>
</gene>